<keyword id="KW-0520">NAD</keyword>
<keyword id="KW-0521">NADP</keyword>
<keyword id="KW-0560">Oxidoreductase</keyword>
<protein>
    <recommendedName>
        <fullName>Coniferyl-alcohol dehydrogenase</fullName>
        <ecNumber>1.1.1.194</ecNumber>
    </recommendedName>
</protein>
<proteinExistence type="evidence at protein level"/>
<accession>P0DMP5</accession>
<reference key="1">
    <citation type="journal article" date="2002" name="Appl. Environ. Microbiol.">
        <title>Biotransformation of eugenol to ferulic acid by a recombinant strain of Ralstonia eutropha H16.</title>
        <authorList>
            <person name="Overhage J."/>
            <person name="Steinbuechel A."/>
            <person name="Priefert H."/>
        </authorList>
    </citation>
    <scope>NUCLEOTIDE SEQUENCE [GENOMIC DNA]</scope>
    <scope>FUNCTION</scope>
    <scope>CATALYTIC ACTIVITY</scope>
</reference>
<reference key="2">
    <citation type="journal article" date="2014" name="PLoS ONE">
        <title>Finding sequences for over 270 orphan enzymes.</title>
        <authorList>
            <person name="Shearer A.G."/>
            <person name="Altman T."/>
            <person name="Rhee C.D."/>
        </authorList>
    </citation>
    <scope>IDENTIFICATION</scope>
</reference>
<sequence>MQLTNKKIVVTGVSSGIGAETARVLRSHGATVIGVDRNMPSLTLDAFVQADLSHPEGIDKAISQLPEKIDGLCNIAGVPGTADPQLVANVNYLGLKYLTEAVLSRIQPGGSIVNVSSVLGAEWPARLQLHKELGSVVGFSEGQAWLKQNPVAPEFCYQYFKEALIVWSQVQAQEWFMRTSVRMNCIAPGPVFTPILNEFVTMLGQERTQADAHRIKRPAYADEVAAVIAFMCAEESRWINGINIPVDGGLASTYV</sequence>
<name>CALA_PSEUH</name>
<gene>
    <name type="primary">calA</name>
</gene>
<comment type="function">
    <text evidence="2">Catalyzes the conversion of coniferyl alcohol into coniferyl aldehyde in the eugenol degradation pathway. Specific for coniferyl alcohol; does not act on cinnamyl alcohol, 4-coumaryl alcohol or sinapyl alcohol.</text>
</comment>
<comment type="catalytic activity">
    <reaction evidence="2">
        <text>(E)-coniferol + NADP(+) = (E)-coniferaldehyde + NADPH + H(+)</text>
        <dbReference type="Rhea" id="RHEA:22444"/>
        <dbReference type="ChEBI" id="CHEBI:15378"/>
        <dbReference type="ChEBI" id="CHEBI:16547"/>
        <dbReference type="ChEBI" id="CHEBI:17745"/>
        <dbReference type="ChEBI" id="CHEBI:57783"/>
        <dbReference type="ChEBI" id="CHEBI:58349"/>
        <dbReference type="EC" id="1.1.1.194"/>
    </reaction>
</comment>
<comment type="similarity">
    <text evidence="3">Belongs to the short-chain dehydrogenases/reductases (SDR) family.</text>
</comment>
<evidence type="ECO:0000250" key="1"/>
<evidence type="ECO:0000269" key="2">
    <source>
    </source>
</evidence>
<evidence type="ECO:0000305" key="3"/>
<dbReference type="EC" id="1.1.1.194"/>
<dbReference type="EMBL" id="A92130">
    <property type="protein sequence ID" value="CAB69495.1"/>
    <property type="molecule type" value="Genomic_RNA"/>
</dbReference>
<dbReference type="SMR" id="P0DMP5"/>
<dbReference type="GO" id="GO:0050268">
    <property type="term" value="F:coniferyl-alcohol dehydrogenase activity"/>
    <property type="evidence" value="ECO:0000314"/>
    <property type="project" value="UniProtKB"/>
</dbReference>
<dbReference type="GO" id="GO:0042856">
    <property type="term" value="P:eugenol catabolic process"/>
    <property type="evidence" value="ECO:0000314"/>
    <property type="project" value="UniProtKB"/>
</dbReference>
<dbReference type="FunFam" id="3.40.50.720:FF:000923">
    <property type="entry name" value="3-alpha-hydroxysteroid dehydrogenase, putative"/>
    <property type="match status" value="1"/>
</dbReference>
<dbReference type="Gene3D" id="3.40.50.720">
    <property type="entry name" value="NAD(P)-binding Rossmann-like Domain"/>
    <property type="match status" value="1"/>
</dbReference>
<dbReference type="InterPro" id="IPR036291">
    <property type="entry name" value="NAD(P)-bd_dom_sf"/>
</dbReference>
<dbReference type="InterPro" id="IPR002347">
    <property type="entry name" value="SDR_fam"/>
</dbReference>
<dbReference type="NCBIfam" id="NF009092">
    <property type="entry name" value="PRK12428.1"/>
    <property type="match status" value="1"/>
</dbReference>
<dbReference type="PANTHER" id="PTHR43975:SF2">
    <property type="entry name" value="EG:BACR7A4.14 PROTEIN-RELATED"/>
    <property type="match status" value="1"/>
</dbReference>
<dbReference type="PANTHER" id="PTHR43975">
    <property type="entry name" value="ZGC:101858"/>
    <property type="match status" value="1"/>
</dbReference>
<dbReference type="Pfam" id="PF00106">
    <property type="entry name" value="adh_short"/>
    <property type="match status" value="1"/>
</dbReference>
<dbReference type="Pfam" id="PF13561">
    <property type="entry name" value="adh_short_C2"/>
    <property type="match status" value="1"/>
</dbReference>
<dbReference type="PRINTS" id="PR00081">
    <property type="entry name" value="GDHRDH"/>
</dbReference>
<dbReference type="SUPFAM" id="SSF51735">
    <property type="entry name" value="NAD(P)-binding Rossmann-fold domains"/>
    <property type="match status" value="1"/>
</dbReference>
<feature type="chain" id="PRO_0000430457" description="Coniferyl-alcohol dehydrogenase">
    <location>
        <begin position="1"/>
        <end position="255"/>
    </location>
</feature>
<feature type="active site" description="Proton acceptor" evidence="1">
    <location>
        <position position="157"/>
    </location>
</feature>
<feature type="binding site" evidence="1">
    <location>
        <begin position="12"/>
        <end position="17"/>
    </location>
    <ligand>
        <name>NAD(+)</name>
        <dbReference type="ChEBI" id="CHEBI:57540"/>
    </ligand>
</feature>
<feature type="binding site" evidence="1">
    <location>
        <position position="36"/>
    </location>
    <ligand>
        <name>NAD(+)</name>
        <dbReference type="ChEBI" id="CHEBI:57540"/>
    </ligand>
</feature>
<feature type="binding site" evidence="1">
    <location>
        <begin position="51"/>
        <end position="52"/>
    </location>
    <ligand>
        <name>NAD(+)</name>
        <dbReference type="ChEBI" id="CHEBI:57540"/>
    </ligand>
</feature>
<feature type="binding site" evidence="1">
    <location>
        <position position="77"/>
    </location>
    <ligand>
        <name>NAD(+)</name>
        <dbReference type="ChEBI" id="CHEBI:57540"/>
    </ligand>
</feature>
<feature type="binding site" evidence="1">
    <location>
        <position position="117"/>
    </location>
    <ligand>
        <name>substrate</name>
    </ligand>
</feature>
<feature type="binding site" evidence="1">
    <location>
        <position position="157"/>
    </location>
    <ligand>
        <name>NAD(+)</name>
        <dbReference type="ChEBI" id="CHEBI:57540"/>
    </ligand>
</feature>
<feature type="binding site" evidence="1">
    <location>
        <position position="161"/>
    </location>
    <ligand>
        <name>NAD(+)</name>
        <dbReference type="ChEBI" id="CHEBI:57540"/>
    </ligand>
</feature>
<organism>
    <name type="scientific">Pseudomonas sp. (strain HR199 / DSM 7063)</name>
    <dbReference type="NCBI Taxonomy" id="86003"/>
    <lineage>
        <taxon>Bacteria</taxon>
        <taxon>Pseudomonadati</taxon>
        <taxon>Pseudomonadota</taxon>
        <taxon>Gammaproteobacteria</taxon>
        <taxon>Pseudomonadales</taxon>
        <taxon>Pseudomonadaceae</taxon>
        <taxon>Pseudomonas</taxon>
    </lineage>
</organism>